<dbReference type="EMBL" id="AJ289772">
    <property type="protein sequence ID" value="CAC20441.1"/>
    <property type="molecule type" value="mRNA"/>
</dbReference>
<dbReference type="EMBL" id="AF345332">
    <property type="protein sequence ID" value="AAL83752.1"/>
    <property type="molecule type" value="mRNA"/>
</dbReference>
<dbReference type="EMBL" id="AF345335">
    <property type="protein sequence ID" value="AAL83755.1"/>
    <property type="molecule type" value="Genomic_DNA"/>
</dbReference>
<dbReference type="EMBL" id="AF393214">
    <property type="protein sequence ID" value="AAM73682.1"/>
    <property type="molecule type" value="mRNA"/>
</dbReference>
<dbReference type="EMBL" id="AB018308">
    <property type="protein sequence ID" value="BAA34485.2"/>
    <property type="status" value="ALT_INIT"/>
    <property type="molecule type" value="mRNA"/>
</dbReference>
<dbReference type="EMBL" id="AK092239">
    <property type="protein sequence ID" value="BAG52504.1"/>
    <property type="molecule type" value="mRNA"/>
</dbReference>
<dbReference type="EMBL" id="AL109827">
    <property type="status" value="NOT_ANNOTATED_CDS"/>
    <property type="molecule type" value="Genomic_DNA"/>
</dbReference>
<dbReference type="EMBL" id="CH471077">
    <property type="protein sequence ID" value="EAW76182.1"/>
    <property type="molecule type" value="Genomic_DNA"/>
</dbReference>
<dbReference type="EMBL" id="CH471077">
    <property type="protein sequence ID" value="EAW76184.1"/>
    <property type="molecule type" value="Genomic_DNA"/>
</dbReference>
<dbReference type="EMBL" id="CH471077">
    <property type="protein sequence ID" value="EAW76188.1"/>
    <property type="molecule type" value="Genomic_DNA"/>
</dbReference>
<dbReference type="EMBL" id="BC012787">
    <property type="protein sequence ID" value="AAH12787.1"/>
    <property type="molecule type" value="mRNA"/>
</dbReference>
<dbReference type="EMBL" id="BC013981">
    <property type="protein sequence ID" value="AAH13981.1"/>
    <property type="molecule type" value="mRNA"/>
</dbReference>
<dbReference type="EMBL" id="AL834472">
    <property type="protein sequence ID" value="CAD39131.1"/>
    <property type="molecule type" value="mRNA"/>
</dbReference>
<dbReference type="EMBL" id="AB015336">
    <property type="protein sequence ID" value="BAA34794.1"/>
    <property type="molecule type" value="mRNA"/>
</dbReference>
<dbReference type="CCDS" id="CCDS13261.1"/>
<dbReference type="RefSeq" id="NP_001185767.1">
    <property type="nucleotide sequence ID" value="NM_001198838.2"/>
</dbReference>
<dbReference type="RefSeq" id="NP_001185769.1">
    <property type="nucleotide sequence ID" value="NM_001198840.2"/>
</dbReference>
<dbReference type="RefSeq" id="NP_006038.2">
    <property type="nucleotide sequence ID" value="NM_006047.5"/>
</dbReference>
<dbReference type="RefSeq" id="NP_690051.1">
    <property type="nucleotide sequence ID" value="NM_152838.4"/>
</dbReference>
<dbReference type="PDB" id="1WEL">
    <property type="method" value="NMR"/>
    <property type="chains" value="A=412-522"/>
</dbReference>
<dbReference type="PDB" id="2CPY">
    <property type="method" value="NMR"/>
    <property type="chains" value="A=536-636"/>
</dbReference>
<dbReference type="PDB" id="2DNN">
    <property type="method" value="NMR"/>
    <property type="chains" value="A=295-390"/>
</dbReference>
<dbReference type="PDB" id="2EK1">
    <property type="method" value="X-ray"/>
    <property type="resolution" value="2.00 A"/>
    <property type="chains" value="A/B/C/D/E/F/G/H=848-929"/>
</dbReference>
<dbReference type="PDB" id="2EK6">
    <property type="method" value="X-ray"/>
    <property type="resolution" value="2.38 A"/>
    <property type="chains" value="A/B/C/D=848-929"/>
</dbReference>
<dbReference type="PDBsum" id="1WEL"/>
<dbReference type="PDBsum" id="2CPY"/>
<dbReference type="PDBsum" id="2DNN"/>
<dbReference type="PDBsum" id="2EK1"/>
<dbReference type="PDBsum" id="2EK6"/>
<dbReference type="SMR" id="Q9NTZ6"/>
<dbReference type="BioGRID" id="115440">
    <property type="interactions" value="126"/>
</dbReference>
<dbReference type="FunCoup" id="Q9NTZ6">
    <property type="interactions" value="2787"/>
</dbReference>
<dbReference type="IntAct" id="Q9NTZ6">
    <property type="interactions" value="78"/>
</dbReference>
<dbReference type="MINT" id="Q9NTZ6"/>
<dbReference type="STRING" id="9606.ENSP00000363228"/>
<dbReference type="GlyCosmos" id="Q9NTZ6">
    <property type="glycosylation" value="11 sites, 2 glycans"/>
</dbReference>
<dbReference type="GlyGen" id="Q9NTZ6">
    <property type="glycosylation" value="18 sites, 3 O-linked glycans (17 sites)"/>
</dbReference>
<dbReference type="iPTMnet" id="Q9NTZ6"/>
<dbReference type="MetOSite" id="Q9NTZ6"/>
<dbReference type="PhosphoSitePlus" id="Q9NTZ6"/>
<dbReference type="BioMuta" id="RBM12"/>
<dbReference type="DMDM" id="30173387"/>
<dbReference type="jPOST" id="Q9NTZ6"/>
<dbReference type="MassIVE" id="Q9NTZ6"/>
<dbReference type="PaxDb" id="9606-ENSP00000363228"/>
<dbReference type="PeptideAtlas" id="Q9NTZ6"/>
<dbReference type="ProteomicsDB" id="82646"/>
<dbReference type="Pumba" id="Q9NTZ6"/>
<dbReference type="Antibodypedia" id="35036">
    <property type="antibodies" value="149 antibodies from 23 providers"/>
</dbReference>
<dbReference type="DNASU" id="10137"/>
<dbReference type="Ensembl" id="ENST00000359646.1">
    <property type="protein sequence ID" value="ENSP00000352668.1"/>
    <property type="gene ID" value="ENSG00000244462.8"/>
</dbReference>
<dbReference type="Ensembl" id="ENST00000374104.7">
    <property type="protein sequence ID" value="ENSP00000363217.3"/>
    <property type="gene ID" value="ENSG00000244462.8"/>
</dbReference>
<dbReference type="Ensembl" id="ENST00000374114.8">
    <property type="protein sequence ID" value="ENSP00000363228.3"/>
    <property type="gene ID" value="ENSG00000244462.8"/>
</dbReference>
<dbReference type="GeneID" id="10137"/>
<dbReference type="KEGG" id="hsa:10137"/>
<dbReference type="MANE-Select" id="ENST00000374114.8">
    <property type="protein sequence ID" value="ENSP00000363228.3"/>
    <property type="RefSeq nucleotide sequence ID" value="NM_006047.6"/>
    <property type="RefSeq protein sequence ID" value="NP_006038.2"/>
</dbReference>
<dbReference type="UCSC" id="uc002xdq.4">
    <property type="organism name" value="human"/>
</dbReference>
<dbReference type="AGR" id="HGNC:9898"/>
<dbReference type="CTD" id="10137"/>
<dbReference type="DisGeNET" id="10137"/>
<dbReference type="GeneCards" id="RBM12"/>
<dbReference type="HGNC" id="HGNC:9898">
    <property type="gene designation" value="RBM12"/>
</dbReference>
<dbReference type="HPA" id="ENSG00000244462">
    <property type="expression patterns" value="Low tissue specificity"/>
</dbReference>
<dbReference type="MalaCards" id="RBM12"/>
<dbReference type="MIM" id="607179">
    <property type="type" value="gene"/>
</dbReference>
<dbReference type="MIM" id="617629">
    <property type="type" value="phenotype"/>
</dbReference>
<dbReference type="neXtProt" id="NX_Q9NTZ6"/>
<dbReference type="OpenTargets" id="ENSG00000244462"/>
<dbReference type="PharmGKB" id="PA34261"/>
<dbReference type="VEuPathDB" id="HostDB:ENSG00000244462"/>
<dbReference type="eggNOG" id="KOG4307">
    <property type="taxonomic scope" value="Eukaryota"/>
</dbReference>
<dbReference type="GeneTree" id="ENSGT00940000160611"/>
<dbReference type="HOGENOM" id="CLU_004368_1_0_1"/>
<dbReference type="InParanoid" id="Q9NTZ6"/>
<dbReference type="OMA" id="VKLMAHC"/>
<dbReference type="OrthoDB" id="2588702at2759"/>
<dbReference type="PAN-GO" id="Q9NTZ6">
    <property type="GO annotations" value="4 GO annotations based on evolutionary models"/>
</dbReference>
<dbReference type="PhylomeDB" id="Q9NTZ6"/>
<dbReference type="TreeFam" id="TF331899"/>
<dbReference type="PathwayCommons" id="Q9NTZ6"/>
<dbReference type="SignaLink" id="Q9NTZ6"/>
<dbReference type="BioGRID-ORCS" id="10137">
    <property type="hits" value="71 hits in 1167 CRISPR screens"/>
</dbReference>
<dbReference type="CD-CODE" id="1A18FFC4">
    <property type="entry name" value="Paraspeckle"/>
</dbReference>
<dbReference type="CD-CODE" id="DEE660B4">
    <property type="entry name" value="Stress granule"/>
</dbReference>
<dbReference type="EvolutionaryTrace" id="Q9NTZ6"/>
<dbReference type="GeneWiki" id="RBM12"/>
<dbReference type="GenomeRNAi" id="10137"/>
<dbReference type="Pharos" id="Q9NTZ6">
    <property type="development level" value="Tbio"/>
</dbReference>
<dbReference type="PRO" id="PR:Q9NTZ6"/>
<dbReference type="Proteomes" id="UP000005640">
    <property type="component" value="Chromosome 20"/>
</dbReference>
<dbReference type="RNAct" id="Q9NTZ6">
    <property type="molecule type" value="protein"/>
</dbReference>
<dbReference type="Bgee" id="ENSG00000244462">
    <property type="expression patterns" value="Expressed in calcaneal tendon and 207 other cell types or tissues"/>
</dbReference>
<dbReference type="ExpressionAtlas" id="Q9NTZ6">
    <property type="expression patterns" value="baseline and differential"/>
</dbReference>
<dbReference type="GO" id="GO:0005654">
    <property type="term" value="C:nucleoplasm"/>
    <property type="evidence" value="ECO:0000314"/>
    <property type="project" value="HPA"/>
</dbReference>
<dbReference type="GO" id="GO:1990904">
    <property type="term" value="C:ribonucleoprotein complex"/>
    <property type="evidence" value="ECO:0000318"/>
    <property type="project" value="GO_Central"/>
</dbReference>
<dbReference type="GO" id="GO:0003723">
    <property type="term" value="F:RNA binding"/>
    <property type="evidence" value="ECO:0007005"/>
    <property type="project" value="UniProtKB"/>
</dbReference>
<dbReference type="GO" id="GO:0043484">
    <property type="term" value="P:regulation of RNA splicing"/>
    <property type="evidence" value="ECO:0000318"/>
    <property type="project" value="GO_Central"/>
</dbReference>
<dbReference type="CDD" id="cd12745">
    <property type="entry name" value="RRM1_RBM12"/>
    <property type="match status" value="1"/>
</dbReference>
<dbReference type="CDD" id="cd12747">
    <property type="entry name" value="RRM2_RBM12"/>
    <property type="match status" value="1"/>
</dbReference>
<dbReference type="CDD" id="cd12512">
    <property type="entry name" value="RRM3_RBM12"/>
    <property type="match status" value="1"/>
</dbReference>
<dbReference type="CDD" id="cd12749">
    <property type="entry name" value="RRM4_RBM12"/>
    <property type="match status" value="1"/>
</dbReference>
<dbReference type="CDD" id="cd12751">
    <property type="entry name" value="RRM5_RBM12"/>
    <property type="match status" value="1"/>
</dbReference>
<dbReference type="FunFam" id="3.30.70.330:FF:000193">
    <property type="entry name" value="RNA-binding motif protein 12"/>
    <property type="match status" value="1"/>
</dbReference>
<dbReference type="FunFam" id="3.30.70.330:FF:000228">
    <property type="entry name" value="RNA-binding motif protein 12"/>
    <property type="match status" value="1"/>
</dbReference>
<dbReference type="FunFam" id="3.30.70.330:FF:000303">
    <property type="entry name" value="RNA-binding motif protein 12"/>
    <property type="match status" value="1"/>
</dbReference>
<dbReference type="FunFam" id="3.30.70.330:FF:000307">
    <property type="entry name" value="RNA-binding motif protein 12"/>
    <property type="match status" value="1"/>
</dbReference>
<dbReference type="FunFam" id="3.30.70.330:FF:000363">
    <property type="entry name" value="RNA-binding motif protein 12"/>
    <property type="match status" value="1"/>
</dbReference>
<dbReference type="Gene3D" id="3.30.70.330">
    <property type="match status" value="5"/>
</dbReference>
<dbReference type="InterPro" id="IPR050666">
    <property type="entry name" value="ESRP"/>
</dbReference>
<dbReference type="InterPro" id="IPR012677">
    <property type="entry name" value="Nucleotide-bd_a/b_plait_sf"/>
</dbReference>
<dbReference type="InterPro" id="IPR035979">
    <property type="entry name" value="RBD_domain_sf"/>
</dbReference>
<dbReference type="InterPro" id="IPR034591">
    <property type="entry name" value="RBM12_RRM1"/>
</dbReference>
<dbReference type="InterPro" id="IPR034594">
    <property type="entry name" value="RBM12_RRM2"/>
</dbReference>
<dbReference type="InterPro" id="IPR034855">
    <property type="entry name" value="RBM12_RRM3"/>
</dbReference>
<dbReference type="InterPro" id="IPR034856">
    <property type="entry name" value="RBM12_RRM4"/>
</dbReference>
<dbReference type="InterPro" id="IPR034854">
    <property type="entry name" value="RBM12_RRM5"/>
</dbReference>
<dbReference type="InterPro" id="IPR000504">
    <property type="entry name" value="RRM_dom"/>
</dbReference>
<dbReference type="PANTHER" id="PTHR13976">
    <property type="entry name" value="HETEROGENEOUS NUCLEAR RIBONUCLEOPROTEIN-RELATED"/>
    <property type="match status" value="1"/>
</dbReference>
<dbReference type="Pfam" id="PF00076">
    <property type="entry name" value="RRM_1"/>
    <property type="match status" value="3"/>
</dbReference>
<dbReference type="SMART" id="SM00360">
    <property type="entry name" value="RRM"/>
    <property type="match status" value="4"/>
</dbReference>
<dbReference type="SUPFAM" id="SSF54928">
    <property type="entry name" value="RNA-binding domain, RBD"/>
    <property type="match status" value="4"/>
</dbReference>
<dbReference type="PROSITE" id="PS50102">
    <property type="entry name" value="RRM"/>
    <property type="match status" value="3"/>
</dbReference>
<evidence type="ECO:0000255" key="1">
    <source>
        <dbReference type="PROSITE-ProRule" id="PRU00176"/>
    </source>
</evidence>
<evidence type="ECO:0000256" key="2">
    <source>
        <dbReference type="SAM" id="MobiDB-lite"/>
    </source>
</evidence>
<evidence type="ECO:0000269" key="3">
    <source>
    </source>
</evidence>
<evidence type="ECO:0000269" key="4">
    <source>
    </source>
</evidence>
<evidence type="ECO:0000305" key="5"/>
<evidence type="ECO:0007744" key="6">
    <source>
    </source>
</evidence>
<evidence type="ECO:0007744" key="7">
    <source>
    </source>
</evidence>
<evidence type="ECO:0007744" key="8">
    <source>
    </source>
</evidence>
<evidence type="ECO:0007744" key="9">
    <source>
    </source>
</evidence>
<evidence type="ECO:0007829" key="10">
    <source>
        <dbReference type="PDB" id="1WEL"/>
    </source>
</evidence>
<evidence type="ECO:0007829" key="11">
    <source>
        <dbReference type="PDB" id="2CPY"/>
    </source>
</evidence>
<evidence type="ECO:0007829" key="12">
    <source>
        <dbReference type="PDB" id="2DNN"/>
    </source>
</evidence>
<evidence type="ECO:0007829" key="13">
    <source>
        <dbReference type="PDB" id="2EK1"/>
    </source>
</evidence>
<gene>
    <name type="primary">RBM12</name>
    <name type="synonym">KIAA0765</name>
    <name type="ORF">HRIHFB2091</name>
</gene>
<feature type="chain" id="PRO_0000081770" description="RNA-binding protein 12">
    <location>
        <begin position="1"/>
        <end position="932"/>
    </location>
</feature>
<feature type="domain" description="RRM 1" evidence="1">
    <location>
        <begin position="304"/>
        <end position="379"/>
    </location>
</feature>
<feature type="domain" description="RRM 2" evidence="1">
    <location>
        <begin position="430"/>
        <end position="507"/>
    </location>
</feature>
<feature type="domain" description="RRM 3" evidence="1">
    <location>
        <begin position="856"/>
        <end position="932"/>
    </location>
</feature>
<feature type="region of interest" description="Disordered" evidence="2">
    <location>
        <begin position="96"/>
        <end position="116"/>
    </location>
</feature>
<feature type="region of interest" description="Disordered" evidence="2">
    <location>
        <begin position="392"/>
        <end position="424"/>
    </location>
</feature>
<feature type="region of interest" description="Disordered" evidence="2">
    <location>
        <begin position="717"/>
        <end position="853"/>
    </location>
</feature>
<feature type="compositionally biased region" description="Low complexity" evidence="2">
    <location>
        <begin position="98"/>
        <end position="116"/>
    </location>
</feature>
<feature type="compositionally biased region" description="Polar residues" evidence="2">
    <location>
        <begin position="392"/>
        <end position="401"/>
    </location>
</feature>
<feature type="compositionally biased region" description="Polar residues" evidence="2">
    <location>
        <begin position="408"/>
        <end position="417"/>
    </location>
</feature>
<feature type="compositionally biased region" description="Low complexity" evidence="2">
    <location>
        <begin position="717"/>
        <end position="734"/>
    </location>
</feature>
<feature type="compositionally biased region" description="Gly residues" evidence="2">
    <location>
        <begin position="783"/>
        <end position="811"/>
    </location>
</feature>
<feature type="compositionally biased region" description="Pro residues" evidence="2">
    <location>
        <begin position="824"/>
        <end position="836"/>
    </location>
</feature>
<feature type="modified residue" description="Phosphoserine" evidence="9">
    <location>
        <position position="352"/>
    </location>
</feature>
<feature type="modified residue" description="Phosphoserine" evidence="9">
    <location>
        <position position="375"/>
    </location>
</feature>
<feature type="modified residue" description="Phosphoserine" evidence="7">
    <location>
        <position position="420"/>
    </location>
</feature>
<feature type="modified residue" description="Phosphoserine" evidence="7 8 9">
    <location>
        <position position="422"/>
    </location>
</feature>
<feature type="modified residue" description="Phosphoserine" evidence="6 7 8 9">
    <location>
        <position position="424"/>
    </location>
</feature>
<feature type="modified residue" description="Phosphoserine" evidence="9">
    <location>
        <position position="525"/>
    </location>
</feature>
<feature type="sequence variant" id="VAR_052217" description="In dbSNP:rs17092928.">
    <original>N</original>
    <variation>S</variation>
    <location>
        <position position="572"/>
    </location>
</feature>
<feature type="sequence variant" id="VAR_078980" description="In SCZD19; associated with disease susceptibility." evidence="3">
    <location>
        <begin position="793"/>
        <end position="932"/>
    </location>
</feature>
<feature type="sequence variant" id="VAR_052218" description="In dbSNP:rs6121012.">
    <original>P</original>
    <variation>L</variation>
    <location>
        <position position="921"/>
    </location>
</feature>
<feature type="sequence conflict" description="In Ref. 1; CAC20441." evidence="5" ref="1">
    <original>S</original>
    <variation>T</variation>
    <location>
        <position position="601"/>
    </location>
</feature>
<feature type="helix" evidence="12">
    <location>
        <begin position="301"/>
        <end position="304"/>
    </location>
</feature>
<feature type="strand" evidence="12">
    <location>
        <begin position="305"/>
        <end position="309"/>
    </location>
</feature>
<feature type="helix" evidence="12">
    <location>
        <begin position="317"/>
        <end position="323"/>
    </location>
</feature>
<feature type="turn" evidence="12">
    <location>
        <begin position="324"/>
        <end position="326"/>
    </location>
</feature>
<feature type="strand" evidence="12">
    <location>
        <begin position="331"/>
        <end position="334"/>
    </location>
</feature>
<feature type="strand" evidence="12">
    <location>
        <begin position="344"/>
        <end position="349"/>
    </location>
</feature>
<feature type="helix" evidence="12">
    <location>
        <begin position="353"/>
        <end position="361"/>
    </location>
</feature>
<feature type="turn" evidence="12">
    <location>
        <begin position="362"/>
        <end position="364"/>
    </location>
</feature>
<feature type="strand" evidence="12">
    <location>
        <begin position="373"/>
        <end position="376"/>
    </location>
</feature>
<feature type="helix" evidence="12">
    <location>
        <begin position="379"/>
        <end position="386"/>
    </location>
</feature>
<feature type="strand" evidence="10">
    <location>
        <begin position="431"/>
        <end position="435"/>
    </location>
</feature>
<feature type="helix" evidence="10">
    <location>
        <begin position="443"/>
        <end position="449"/>
    </location>
</feature>
<feature type="turn" evidence="10">
    <location>
        <begin position="457"/>
        <end position="459"/>
    </location>
</feature>
<feature type="strand" evidence="10">
    <location>
        <begin position="461"/>
        <end position="464"/>
    </location>
</feature>
<feature type="strand" evidence="10">
    <location>
        <begin position="468"/>
        <end position="481"/>
    </location>
</feature>
<feature type="helix" evidence="10">
    <location>
        <begin position="482"/>
        <end position="488"/>
    </location>
</feature>
<feature type="strand" evidence="10">
    <location>
        <begin position="500"/>
        <end position="505"/>
    </location>
</feature>
<feature type="helix" evidence="10">
    <location>
        <begin position="507"/>
        <end position="521"/>
    </location>
</feature>
<feature type="strand" evidence="11">
    <location>
        <begin position="545"/>
        <end position="550"/>
    </location>
</feature>
<feature type="helix" evidence="11">
    <location>
        <begin position="557"/>
        <end position="563"/>
    </location>
</feature>
<feature type="turn" evidence="11">
    <location>
        <begin position="564"/>
        <end position="566"/>
    </location>
</feature>
<feature type="strand" evidence="11">
    <location>
        <begin position="574"/>
        <end position="576"/>
    </location>
</feature>
<feature type="strand" evidence="11">
    <location>
        <begin position="588"/>
        <end position="591"/>
    </location>
</feature>
<feature type="helix" evidence="11">
    <location>
        <begin position="595"/>
        <end position="601"/>
    </location>
</feature>
<feature type="helix" evidence="11">
    <location>
        <begin position="602"/>
        <end position="604"/>
    </location>
</feature>
<feature type="strand" evidence="11">
    <location>
        <begin position="606"/>
        <end position="609"/>
    </location>
</feature>
<feature type="strand" evidence="11">
    <location>
        <begin position="612"/>
        <end position="619"/>
    </location>
</feature>
<feature type="helix" evidence="11">
    <location>
        <begin position="621"/>
        <end position="629"/>
    </location>
</feature>
<feature type="strand" evidence="13">
    <location>
        <begin position="856"/>
        <end position="861"/>
    </location>
</feature>
<feature type="helix" evidence="13">
    <location>
        <begin position="869"/>
        <end position="875"/>
    </location>
</feature>
<feature type="turn" evidence="13">
    <location>
        <begin position="876"/>
        <end position="880"/>
    </location>
</feature>
<feature type="strand" evidence="13">
    <location>
        <begin position="887"/>
        <end position="890"/>
    </location>
</feature>
<feature type="strand" evidence="13">
    <location>
        <begin position="896"/>
        <end position="906"/>
    </location>
</feature>
<feature type="helix" evidence="13">
    <location>
        <begin position="907"/>
        <end position="917"/>
    </location>
</feature>
<keyword id="KW-0002">3D-structure</keyword>
<keyword id="KW-0225">Disease variant</keyword>
<keyword id="KW-0539">Nucleus</keyword>
<keyword id="KW-0597">Phosphoprotein</keyword>
<keyword id="KW-1267">Proteomics identification</keyword>
<keyword id="KW-1185">Reference proteome</keyword>
<keyword id="KW-0677">Repeat</keyword>
<keyword id="KW-0694">RNA-binding</keyword>
<keyword id="KW-1211">Schizophrenia</keyword>
<comment type="interaction">
    <interactant intactId="EBI-310707">
        <id>Q9NTZ6</id>
    </interactant>
    <interactant intactId="EBI-748974">
        <id>Q96CV9</id>
        <label>OPTN</label>
    </interactant>
    <organismsDiffer>false</organismsDiffer>
    <experiments>7</experiments>
</comment>
<comment type="interaction">
    <interactant intactId="EBI-310707">
        <id>Q9NTZ6</id>
    </interactant>
    <interactant intactId="EBI-78458">
        <id>P55345</id>
        <label>PRMT2</label>
    </interactant>
    <organismsDiffer>false</organismsDiffer>
    <experiments>3</experiments>
</comment>
<comment type="subcellular location">
    <subcellularLocation>
        <location evidence="4">Nucleus</location>
    </subcellularLocation>
</comment>
<comment type="disease" evidence="3">
    <disease id="DI-05073">
        <name>Schizophrenia 19</name>
        <acronym>SCZD19</acronym>
        <description>A complex, multifactorial psychotic disorder or group of disorders characterized by disturbances in the form and content of thought (e.g. delusions, hallucinations), in mood (e.g. inappropriate affect), in sense of self and relationship to the external world (e.g. loss of ego boundaries, withdrawal), and in behavior (e.g bizarre or apparently purposeless behavior). Although it affects emotions, it is distinguished from mood disorders in which such disturbances are primary. Similarly, there may be mild impairment of cognitive function, and it is distinguished from the dementias in which disturbed cognitive function is considered primary. Some patients manifest schizophrenic as well as bipolar disorder symptoms and are often given the diagnosis of schizoaffective disorder.</description>
        <dbReference type="MIM" id="617629"/>
    </disease>
    <text>Disease susceptibility is associated with variants affecting the gene represented in this entry.</text>
</comment>
<comment type="sequence caution" evidence="5">
    <conflict type="erroneous initiation">
        <sequence resource="EMBL-CDS" id="BAA34485"/>
    </conflict>
</comment>
<name>RBM12_HUMAN</name>
<organism>
    <name type="scientific">Homo sapiens</name>
    <name type="common">Human</name>
    <dbReference type="NCBI Taxonomy" id="9606"/>
    <lineage>
        <taxon>Eukaryota</taxon>
        <taxon>Metazoa</taxon>
        <taxon>Chordata</taxon>
        <taxon>Craniata</taxon>
        <taxon>Vertebrata</taxon>
        <taxon>Euteleostomi</taxon>
        <taxon>Mammalia</taxon>
        <taxon>Eutheria</taxon>
        <taxon>Euarchontoglires</taxon>
        <taxon>Primates</taxon>
        <taxon>Haplorrhini</taxon>
        <taxon>Catarrhini</taxon>
        <taxon>Hominidae</taxon>
        <taxon>Homo</taxon>
    </lineage>
</organism>
<reference key="1">
    <citation type="journal article" date="2001" name="Cytogenet. Cell Genet.">
        <title>cDNA cloning, chromosomal assignment, and genomic structure of a human gene encoding a novel member of the RBM family.</title>
        <authorList>
            <person name="Stover C.M."/>
            <person name="Gradl G."/>
            <person name="Jentsch I."/>
            <person name="Speicher M.R."/>
            <person name="Wieser R."/>
            <person name="Schwaeble W.J."/>
        </authorList>
    </citation>
    <scope>NUCLEOTIDE SEQUENCE [MRNA]</scope>
    <source>
        <tissue>Leukemia</tissue>
    </source>
</reference>
<reference key="2">
    <citation type="submission" date="2001-06" db="EMBL/GenBank/DDBJ databases">
        <title>Identification of SWAN as a novel hnRNP-like adaptor protein with multiple domains and broadly expressed in mammalian tissues.</title>
        <authorList>
            <person name="Huang C.-H."/>
        </authorList>
    </citation>
    <scope>NUCLEOTIDE SEQUENCE [GENOMIC DNA / MRNA]</scope>
</reference>
<reference key="3">
    <citation type="journal article" date="1998" name="DNA Res.">
        <title>Prediction of the coding sequences of unidentified human genes. XI. The complete sequences of 100 new cDNA clones from brain which code for large proteins in vitro.</title>
        <authorList>
            <person name="Nagase T."/>
            <person name="Ishikawa K."/>
            <person name="Suyama M."/>
            <person name="Kikuno R."/>
            <person name="Miyajima N."/>
            <person name="Tanaka A."/>
            <person name="Kotani H."/>
            <person name="Nomura N."/>
            <person name="Ohara O."/>
        </authorList>
    </citation>
    <scope>NUCLEOTIDE SEQUENCE [LARGE SCALE MRNA]</scope>
    <source>
        <tissue>Brain</tissue>
    </source>
</reference>
<reference key="4">
    <citation type="journal article" date="2002" name="DNA Res.">
        <title>Construction of expression-ready cDNA clones for KIAA genes: manual curation of 330 KIAA cDNA clones.</title>
        <authorList>
            <person name="Nakajima D."/>
            <person name="Okazaki N."/>
            <person name="Yamakawa H."/>
            <person name="Kikuno R."/>
            <person name="Ohara O."/>
            <person name="Nagase T."/>
        </authorList>
    </citation>
    <scope>SEQUENCE REVISION</scope>
</reference>
<reference key="5">
    <citation type="journal article" date="2004" name="Nat. Genet.">
        <title>Complete sequencing and characterization of 21,243 full-length human cDNAs.</title>
        <authorList>
            <person name="Ota T."/>
            <person name="Suzuki Y."/>
            <person name="Nishikawa T."/>
            <person name="Otsuki T."/>
            <person name="Sugiyama T."/>
            <person name="Irie R."/>
            <person name="Wakamatsu A."/>
            <person name="Hayashi K."/>
            <person name="Sato H."/>
            <person name="Nagai K."/>
            <person name="Kimura K."/>
            <person name="Makita H."/>
            <person name="Sekine M."/>
            <person name="Obayashi M."/>
            <person name="Nishi T."/>
            <person name="Shibahara T."/>
            <person name="Tanaka T."/>
            <person name="Ishii S."/>
            <person name="Yamamoto J."/>
            <person name="Saito K."/>
            <person name="Kawai Y."/>
            <person name="Isono Y."/>
            <person name="Nakamura Y."/>
            <person name="Nagahari K."/>
            <person name="Murakami K."/>
            <person name="Yasuda T."/>
            <person name="Iwayanagi T."/>
            <person name="Wagatsuma M."/>
            <person name="Shiratori A."/>
            <person name="Sudo H."/>
            <person name="Hosoiri T."/>
            <person name="Kaku Y."/>
            <person name="Kodaira H."/>
            <person name="Kondo H."/>
            <person name="Sugawara M."/>
            <person name="Takahashi M."/>
            <person name="Kanda K."/>
            <person name="Yokoi T."/>
            <person name="Furuya T."/>
            <person name="Kikkawa E."/>
            <person name="Omura Y."/>
            <person name="Abe K."/>
            <person name="Kamihara K."/>
            <person name="Katsuta N."/>
            <person name="Sato K."/>
            <person name="Tanikawa M."/>
            <person name="Yamazaki M."/>
            <person name="Ninomiya K."/>
            <person name="Ishibashi T."/>
            <person name="Yamashita H."/>
            <person name="Murakawa K."/>
            <person name="Fujimori K."/>
            <person name="Tanai H."/>
            <person name="Kimata M."/>
            <person name="Watanabe M."/>
            <person name="Hiraoka S."/>
            <person name="Chiba Y."/>
            <person name="Ishida S."/>
            <person name="Ono Y."/>
            <person name="Takiguchi S."/>
            <person name="Watanabe S."/>
            <person name="Yosida M."/>
            <person name="Hotuta T."/>
            <person name="Kusano J."/>
            <person name="Kanehori K."/>
            <person name="Takahashi-Fujii A."/>
            <person name="Hara H."/>
            <person name="Tanase T.-O."/>
            <person name="Nomura Y."/>
            <person name="Togiya S."/>
            <person name="Komai F."/>
            <person name="Hara R."/>
            <person name="Takeuchi K."/>
            <person name="Arita M."/>
            <person name="Imose N."/>
            <person name="Musashino K."/>
            <person name="Yuuki H."/>
            <person name="Oshima A."/>
            <person name="Sasaki N."/>
            <person name="Aotsuka S."/>
            <person name="Yoshikawa Y."/>
            <person name="Matsunawa H."/>
            <person name="Ichihara T."/>
            <person name="Shiohata N."/>
            <person name="Sano S."/>
            <person name="Moriya S."/>
            <person name="Momiyama H."/>
            <person name="Satoh N."/>
            <person name="Takami S."/>
            <person name="Terashima Y."/>
            <person name="Suzuki O."/>
            <person name="Nakagawa S."/>
            <person name="Senoh A."/>
            <person name="Mizoguchi H."/>
            <person name="Goto Y."/>
            <person name="Shimizu F."/>
            <person name="Wakebe H."/>
            <person name="Hishigaki H."/>
            <person name="Watanabe T."/>
            <person name="Sugiyama A."/>
            <person name="Takemoto M."/>
            <person name="Kawakami B."/>
            <person name="Yamazaki M."/>
            <person name="Watanabe K."/>
            <person name="Kumagai A."/>
            <person name="Itakura S."/>
            <person name="Fukuzumi Y."/>
            <person name="Fujimori Y."/>
            <person name="Komiyama M."/>
            <person name="Tashiro H."/>
            <person name="Tanigami A."/>
            <person name="Fujiwara T."/>
            <person name="Ono T."/>
            <person name="Yamada K."/>
            <person name="Fujii Y."/>
            <person name="Ozaki K."/>
            <person name="Hirao M."/>
            <person name="Ohmori Y."/>
            <person name="Kawabata A."/>
            <person name="Hikiji T."/>
            <person name="Kobatake N."/>
            <person name="Inagaki H."/>
            <person name="Ikema Y."/>
            <person name="Okamoto S."/>
            <person name="Okitani R."/>
            <person name="Kawakami T."/>
            <person name="Noguchi S."/>
            <person name="Itoh T."/>
            <person name="Shigeta K."/>
            <person name="Senba T."/>
            <person name="Matsumura K."/>
            <person name="Nakajima Y."/>
            <person name="Mizuno T."/>
            <person name="Morinaga M."/>
            <person name="Sasaki M."/>
            <person name="Togashi T."/>
            <person name="Oyama M."/>
            <person name="Hata H."/>
            <person name="Watanabe M."/>
            <person name="Komatsu T."/>
            <person name="Mizushima-Sugano J."/>
            <person name="Satoh T."/>
            <person name="Shirai Y."/>
            <person name="Takahashi Y."/>
            <person name="Nakagawa K."/>
            <person name="Okumura K."/>
            <person name="Nagase T."/>
            <person name="Nomura N."/>
            <person name="Kikuchi H."/>
            <person name="Masuho Y."/>
            <person name="Yamashita R."/>
            <person name="Nakai K."/>
            <person name="Yada T."/>
            <person name="Nakamura Y."/>
            <person name="Ohara O."/>
            <person name="Isogai T."/>
            <person name="Sugano S."/>
        </authorList>
    </citation>
    <scope>NUCLEOTIDE SEQUENCE [LARGE SCALE MRNA]</scope>
</reference>
<reference key="6">
    <citation type="journal article" date="2001" name="Nature">
        <title>The DNA sequence and comparative analysis of human chromosome 20.</title>
        <authorList>
            <person name="Deloukas P."/>
            <person name="Matthews L.H."/>
            <person name="Ashurst J.L."/>
            <person name="Burton J."/>
            <person name="Gilbert J.G.R."/>
            <person name="Jones M."/>
            <person name="Stavrides G."/>
            <person name="Almeida J.P."/>
            <person name="Babbage A.K."/>
            <person name="Bagguley C.L."/>
            <person name="Bailey J."/>
            <person name="Barlow K.F."/>
            <person name="Bates K.N."/>
            <person name="Beard L.M."/>
            <person name="Beare D.M."/>
            <person name="Beasley O.P."/>
            <person name="Bird C.P."/>
            <person name="Blakey S.E."/>
            <person name="Bridgeman A.M."/>
            <person name="Brown A.J."/>
            <person name="Buck D."/>
            <person name="Burrill W.D."/>
            <person name="Butler A.P."/>
            <person name="Carder C."/>
            <person name="Carter N.P."/>
            <person name="Chapman J.C."/>
            <person name="Clamp M."/>
            <person name="Clark G."/>
            <person name="Clark L.N."/>
            <person name="Clark S.Y."/>
            <person name="Clee C.M."/>
            <person name="Clegg S."/>
            <person name="Cobley V.E."/>
            <person name="Collier R.E."/>
            <person name="Connor R.E."/>
            <person name="Corby N.R."/>
            <person name="Coulson A."/>
            <person name="Coville G.J."/>
            <person name="Deadman R."/>
            <person name="Dhami P.D."/>
            <person name="Dunn M."/>
            <person name="Ellington A.G."/>
            <person name="Frankland J.A."/>
            <person name="Fraser A."/>
            <person name="French L."/>
            <person name="Garner P."/>
            <person name="Grafham D.V."/>
            <person name="Griffiths C."/>
            <person name="Griffiths M.N.D."/>
            <person name="Gwilliam R."/>
            <person name="Hall R.E."/>
            <person name="Hammond S."/>
            <person name="Harley J.L."/>
            <person name="Heath P.D."/>
            <person name="Ho S."/>
            <person name="Holden J.L."/>
            <person name="Howden P.J."/>
            <person name="Huckle E."/>
            <person name="Hunt A.R."/>
            <person name="Hunt S.E."/>
            <person name="Jekosch K."/>
            <person name="Johnson C.M."/>
            <person name="Johnson D."/>
            <person name="Kay M.P."/>
            <person name="Kimberley A.M."/>
            <person name="King A."/>
            <person name="Knights A."/>
            <person name="Laird G.K."/>
            <person name="Lawlor S."/>
            <person name="Lehvaeslaiho M.H."/>
            <person name="Leversha M.A."/>
            <person name="Lloyd C."/>
            <person name="Lloyd D.M."/>
            <person name="Lovell J.D."/>
            <person name="Marsh V.L."/>
            <person name="Martin S.L."/>
            <person name="McConnachie L.J."/>
            <person name="McLay K."/>
            <person name="McMurray A.A."/>
            <person name="Milne S.A."/>
            <person name="Mistry D."/>
            <person name="Moore M.J.F."/>
            <person name="Mullikin J.C."/>
            <person name="Nickerson T."/>
            <person name="Oliver K."/>
            <person name="Parker A."/>
            <person name="Patel R."/>
            <person name="Pearce T.A.V."/>
            <person name="Peck A.I."/>
            <person name="Phillimore B.J.C.T."/>
            <person name="Prathalingam S.R."/>
            <person name="Plumb R.W."/>
            <person name="Ramsay H."/>
            <person name="Rice C.M."/>
            <person name="Ross M.T."/>
            <person name="Scott C.E."/>
            <person name="Sehra H.K."/>
            <person name="Shownkeen R."/>
            <person name="Sims S."/>
            <person name="Skuce C.D."/>
            <person name="Smith M.L."/>
            <person name="Soderlund C."/>
            <person name="Steward C.A."/>
            <person name="Sulston J.E."/>
            <person name="Swann R.M."/>
            <person name="Sycamore N."/>
            <person name="Taylor R."/>
            <person name="Tee L."/>
            <person name="Thomas D.W."/>
            <person name="Thorpe A."/>
            <person name="Tracey A."/>
            <person name="Tromans A.C."/>
            <person name="Vaudin M."/>
            <person name="Wall M."/>
            <person name="Wallis J.M."/>
            <person name="Whitehead S.L."/>
            <person name="Whittaker P."/>
            <person name="Willey D.L."/>
            <person name="Williams L."/>
            <person name="Williams S.A."/>
            <person name="Wilming L."/>
            <person name="Wray P.W."/>
            <person name="Hubbard T."/>
            <person name="Durbin R.M."/>
            <person name="Bentley D.R."/>
            <person name="Beck S."/>
            <person name="Rogers J."/>
        </authorList>
    </citation>
    <scope>NUCLEOTIDE SEQUENCE [LARGE SCALE GENOMIC DNA]</scope>
</reference>
<reference key="7">
    <citation type="submission" date="2005-09" db="EMBL/GenBank/DDBJ databases">
        <authorList>
            <person name="Mural R.J."/>
            <person name="Istrail S."/>
            <person name="Sutton G.G."/>
            <person name="Florea L."/>
            <person name="Halpern A.L."/>
            <person name="Mobarry C.M."/>
            <person name="Lippert R."/>
            <person name="Walenz B."/>
            <person name="Shatkay H."/>
            <person name="Dew I."/>
            <person name="Miller J.R."/>
            <person name="Flanigan M.J."/>
            <person name="Edwards N.J."/>
            <person name="Bolanos R."/>
            <person name="Fasulo D."/>
            <person name="Halldorsson B.V."/>
            <person name="Hannenhalli S."/>
            <person name="Turner R."/>
            <person name="Yooseph S."/>
            <person name="Lu F."/>
            <person name="Nusskern D.R."/>
            <person name="Shue B.C."/>
            <person name="Zheng X.H."/>
            <person name="Zhong F."/>
            <person name="Delcher A.L."/>
            <person name="Huson D.H."/>
            <person name="Kravitz S.A."/>
            <person name="Mouchard L."/>
            <person name="Reinert K."/>
            <person name="Remington K.A."/>
            <person name="Clark A.G."/>
            <person name="Waterman M.S."/>
            <person name="Eichler E.E."/>
            <person name="Adams M.D."/>
            <person name="Hunkapiller M.W."/>
            <person name="Myers E.W."/>
            <person name="Venter J.C."/>
        </authorList>
    </citation>
    <scope>NUCLEOTIDE SEQUENCE [LARGE SCALE GENOMIC DNA]</scope>
</reference>
<reference key="8">
    <citation type="journal article" date="2004" name="Genome Res.">
        <title>The status, quality, and expansion of the NIH full-length cDNA project: the Mammalian Gene Collection (MGC).</title>
        <authorList>
            <consortium name="The MGC Project Team"/>
        </authorList>
    </citation>
    <scope>NUCLEOTIDE SEQUENCE [LARGE SCALE MRNA]</scope>
    <source>
        <tissue>Placenta</tissue>
    </source>
</reference>
<reference key="9">
    <citation type="journal article" date="2007" name="BMC Genomics">
        <title>The full-ORF clone resource of the German cDNA consortium.</title>
        <authorList>
            <person name="Bechtel S."/>
            <person name="Rosenfelder H."/>
            <person name="Duda A."/>
            <person name="Schmidt C.P."/>
            <person name="Ernst U."/>
            <person name="Wellenreuther R."/>
            <person name="Mehrle A."/>
            <person name="Schuster C."/>
            <person name="Bahr A."/>
            <person name="Bloecker H."/>
            <person name="Heubner D."/>
            <person name="Hoerlein A."/>
            <person name="Michel G."/>
            <person name="Wedler H."/>
            <person name="Koehrer K."/>
            <person name="Ottenwaelder B."/>
            <person name="Poustka A."/>
            <person name="Wiemann S."/>
            <person name="Schupp I."/>
        </authorList>
    </citation>
    <scope>NUCLEOTIDE SEQUENCE [LARGE SCALE MRNA] OF 270-932</scope>
    <source>
        <tissue>Melanoma</tissue>
    </source>
</reference>
<reference key="10">
    <citation type="journal article" date="1998" name="Nat. Biotechnol.">
        <title>Selection system for genes encoding nuclear-targeted proteins.</title>
        <authorList>
            <person name="Ueki N."/>
            <person name="Oda T."/>
            <person name="Kondo M."/>
            <person name="Yano K."/>
            <person name="Noguchi T."/>
            <person name="Muramatsu M.-A."/>
        </authorList>
    </citation>
    <scope>NUCLEOTIDE SEQUENCE [LARGE SCALE MRNA] OF 557-932</scope>
    <scope>SUBCELLULAR LOCATION</scope>
    <source>
        <tissue>Brain</tissue>
    </source>
</reference>
<reference key="11">
    <citation type="journal article" date="2004" name="Anal. Chem.">
        <title>Robust phosphoproteomic profiling of tyrosine phosphorylation sites from human T cells using immobilized metal affinity chromatography and tandem mass spectrometry.</title>
        <authorList>
            <person name="Brill L.M."/>
            <person name="Salomon A.R."/>
            <person name="Ficarro S.B."/>
            <person name="Mukherji M."/>
            <person name="Stettler-Gill M."/>
            <person name="Peters E.C."/>
        </authorList>
    </citation>
    <scope>IDENTIFICATION BY MASS SPECTROMETRY [LARGE SCALE ANALYSIS]</scope>
    <source>
        <tissue>Leukemic T-cell</tissue>
    </source>
</reference>
<reference key="12">
    <citation type="journal article" date="2006" name="Cell">
        <title>Global, in vivo, and site-specific phosphorylation dynamics in signaling networks.</title>
        <authorList>
            <person name="Olsen J.V."/>
            <person name="Blagoev B."/>
            <person name="Gnad F."/>
            <person name="Macek B."/>
            <person name="Kumar C."/>
            <person name="Mortensen P."/>
            <person name="Mann M."/>
        </authorList>
    </citation>
    <scope>IDENTIFICATION BY MASS SPECTROMETRY [LARGE SCALE ANALYSIS]</scope>
    <source>
        <tissue>Cervix carcinoma</tissue>
    </source>
</reference>
<reference key="13">
    <citation type="journal article" date="2008" name="J. Proteome Res.">
        <title>Combining protein-based IMAC, peptide-based IMAC, and MudPIT for efficient phosphoproteomic analysis.</title>
        <authorList>
            <person name="Cantin G.T."/>
            <person name="Yi W."/>
            <person name="Lu B."/>
            <person name="Park S.K."/>
            <person name="Xu T."/>
            <person name="Lee J.-D."/>
            <person name="Yates J.R. III"/>
        </authorList>
    </citation>
    <scope>PHOSPHORYLATION [LARGE SCALE ANALYSIS] AT SER-424</scope>
    <scope>IDENTIFICATION BY MASS SPECTROMETRY [LARGE SCALE ANALYSIS]</scope>
    <source>
        <tissue>Cervix carcinoma</tissue>
    </source>
</reference>
<reference key="14">
    <citation type="journal article" date="2008" name="Proc. Natl. Acad. Sci. U.S.A.">
        <title>A quantitative atlas of mitotic phosphorylation.</title>
        <authorList>
            <person name="Dephoure N."/>
            <person name="Zhou C."/>
            <person name="Villen J."/>
            <person name="Beausoleil S.A."/>
            <person name="Bakalarski C.E."/>
            <person name="Elledge S.J."/>
            <person name="Gygi S.P."/>
        </authorList>
    </citation>
    <scope>PHOSPHORYLATION [LARGE SCALE ANALYSIS] AT SER-420; SER-422 AND SER-424</scope>
    <scope>IDENTIFICATION BY MASS SPECTROMETRY [LARGE SCALE ANALYSIS]</scope>
    <source>
        <tissue>Cervix carcinoma</tissue>
    </source>
</reference>
<reference key="15">
    <citation type="journal article" date="2011" name="BMC Syst. Biol.">
        <title>Initial characterization of the human central proteome.</title>
        <authorList>
            <person name="Burkard T.R."/>
            <person name="Planyavsky M."/>
            <person name="Kaupe I."/>
            <person name="Breitwieser F.P."/>
            <person name="Buerckstuemmer T."/>
            <person name="Bennett K.L."/>
            <person name="Superti-Furga G."/>
            <person name="Colinge J."/>
        </authorList>
    </citation>
    <scope>IDENTIFICATION BY MASS SPECTROMETRY [LARGE SCALE ANALYSIS]</scope>
</reference>
<reference key="16">
    <citation type="journal article" date="2011" name="Sci. Signal.">
        <title>System-wide temporal characterization of the proteome and phosphoproteome of human embryonic stem cell differentiation.</title>
        <authorList>
            <person name="Rigbolt K.T."/>
            <person name="Prokhorova T.A."/>
            <person name="Akimov V."/>
            <person name="Henningsen J."/>
            <person name="Johansen P.T."/>
            <person name="Kratchmarova I."/>
            <person name="Kassem M."/>
            <person name="Mann M."/>
            <person name="Olsen J.V."/>
            <person name="Blagoev B."/>
        </authorList>
    </citation>
    <scope>PHOSPHORYLATION [LARGE SCALE ANALYSIS] AT SER-422 AND SER-424</scope>
    <scope>IDENTIFICATION BY MASS SPECTROMETRY [LARGE SCALE ANALYSIS]</scope>
</reference>
<reference key="17">
    <citation type="journal article" date="2013" name="J. Proteome Res.">
        <title>Toward a comprehensive characterization of a human cancer cell phosphoproteome.</title>
        <authorList>
            <person name="Zhou H."/>
            <person name="Di Palma S."/>
            <person name="Preisinger C."/>
            <person name="Peng M."/>
            <person name="Polat A.N."/>
            <person name="Heck A.J."/>
            <person name="Mohammed S."/>
        </authorList>
    </citation>
    <scope>PHOSPHORYLATION [LARGE SCALE ANALYSIS] AT SER-352; SER-375; SER-422; SER-424 AND SER-525</scope>
    <scope>IDENTIFICATION BY MASS SPECTROMETRY [LARGE SCALE ANALYSIS]</scope>
    <source>
        <tissue>Cervix carcinoma</tissue>
        <tissue>Erythroleukemia</tissue>
    </source>
</reference>
<reference key="18">
    <citation type="journal article" date="2014" name="Am. J. Med. Genet. A">
        <title>Haploinsufficiency of MEIS2 is associated with orofacial clefting and learning disability.</title>
        <authorList>
            <person name="Johansson S."/>
            <person name="Berland S."/>
            <person name="Gradek G.A."/>
            <person name="Bongers E."/>
            <person name="de Leeuw N."/>
            <person name="Pfundt R."/>
            <person name="Fannemel M."/>
            <person name="Roedningen O."/>
            <person name="Brendehaug A."/>
            <person name="Haukanes B.I."/>
            <person name="Hovland R."/>
            <person name="Helland G."/>
            <person name="Houge G."/>
        </authorList>
    </citation>
    <scope>INVOLVEMENT IN CPCMR</scope>
</reference>
<reference key="19">
    <citation type="journal article" date="2017" name="Nat. Genet.">
        <title>Truncating mutations in RBM12 are associated with psychosis.</title>
        <authorList>
            <person name="Steinberg S."/>
            <person name="Gudmundsdottir S."/>
            <person name="Sveinbjornsson G."/>
            <person name="Suvisaari J."/>
            <person name="Paunio T."/>
            <person name="Torniainen-Holm M."/>
            <person name="Frigge M.L."/>
            <person name="Jonsdottir G.A."/>
            <person name="Huttenlocher J."/>
            <person name="Arnarsdottir S."/>
            <person name="Ingimarsson O."/>
            <person name="Haraldsson M."/>
            <person name="Tyrfingsson T."/>
            <person name="Thorgeirsson T.E."/>
            <person name="Kong A."/>
            <person name="Norddahl G.L."/>
            <person name="Gudbjartsson D.F."/>
            <person name="Sigurdsson E."/>
            <person name="Stefansson H."/>
            <person name="Stefansson K."/>
        </authorList>
    </citation>
    <scope>INVOLVEMENT IN SCZD19</scope>
    <scope>VARIANT SCZD19 793-GLY--GLY-932 DEL</scope>
</reference>
<reference key="20">
    <citation type="submission" date="2006-10" db="PDB data bank">
        <title>Solution structure of RNA binding domains in RNA-binding protein 12.</title>
        <authorList>
            <consortium name="RIKEN structural genomics initiative (RSGI)"/>
        </authorList>
    </citation>
    <scope>STRUCTURE BY NMR OF 290-638</scope>
</reference>
<proteinExistence type="evidence at protein level"/>
<protein>
    <recommendedName>
        <fullName>RNA-binding protein 12</fullName>
    </recommendedName>
    <alternativeName>
        <fullName>RNA-binding motif protein 12</fullName>
    </alternativeName>
    <alternativeName>
        <fullName>SH3/WW domain anchor protein in the nucleus</fullName>
        <shortName>SWAN</shortName>
    </alternativeName>
</protein>
<accession>Q9NTZ6</accession>
<accession>B3KRU2</accession>
<accession>E1P5R6</accession>
<accession>O94865</accession>
<accession>Q8N3B1</accession>
<accession>Q9H196</accession>
<sequence>MAVVIRLQGLPIVAGTMDIRHFFSGLTIPDGGVHIVGGELGEAFIVFATDEDARLGMMRTGGTIKGSKVTLLLSSKTEMQNMIELSRRRFETANLDIPPANASRSGPPPSSGMSSRVNLPTTVSNFNNPSPSVVTATTSVHESNKNIQTFSTASVGTAPPNMGASFGSPTFSSTVPSTASPMNTVPPPPIPPIPAMPSLPPMPSIPPIPVPPPVPTLPPVPPVPPIPPVPSVPPMTPLPPMSGMPPLNPPPVAPLPAGMNGSGAPMNLNNNLNPMFLGPLNPVNPIQMNSQSSVKPLPINPDDLYVSVHGMPFSAMENDVRDFFHGLRVDAVHLLKDHVGRNNGNGLVKFLSPQDTFEALKRNRMLMIQRYVEVSPATERQWVAAGGHITFKQNMGPSGQTHPPPQTLPRSKSPSGQKRSRSRSPHEAGFCVYLKGLPFEAENKHVIDFFKKLDIVEDSIYIAYGPNGKATGEGFVEFRNEADYKAALCRHKQYMGNRFIQVHPITKKGMLEKIDMIRKRLQNFSYDQREMILNPEGDVNSAKVCAHITNIPFSITKMDVLQFLEGIPVDENAVHVLVDNNGQGLGQALVQFKNEDDARKSERLHRKKLNGREAFVHVVTLEDMREIEKNPPAQGKKGLKMPVPGNPAVPGMPNAGLPGVGLPSAGLPGAGLPSTGLPGSAITSAGLPGAGMPSAGIPSAGGEEHAFLTVGSKEANNGPPFNFPGNFGGSNAFGPPIPPPGLGGGAFGDARPGMPSVGNSGLPGLGLDVPGFGGGPNNLSGPSGFGGGPQNFGNGPGSLGGPPGFGSGPPGLGSAPGHLGGPPAFGPGPGPGPGPGPIHIGGPPGFASSSGKPGPTVIKVQNMPFTVSIDEILDFFYGYQVIPGSVCLKYNEKGMPTGEAMVAFESRDEATAAVIDLNDRPIGSRKVKLVLG</sequence>